<proteinExistence type="inferred from homology"/>
<evidence type="ECO:0000255" key="1">
    <source>
        <dbReference type="HAMAP-Rule" id="MF_01347"/>
    </source>
</evidence>
<organism>
    <name type="scientific">Angiopteris evecta</name>
    <name type="common">Mule's foot fern</name>
    <name type="synonym">Polypodium evectum</name>
    <dbReference type="NCBI Taxonomy" id="13825"/>
    <lineage>
        <taxon>Eukaryota</taxon>
        <taxon>Viridiplantae</taxon>
        <taxon>Streptophyta</taxon>
        <taxon>Embryophyta</taxon>
        <taxon>Tracheophyta</taxon>
        <taxon>Polypodiopsida</taxon>
        <taxon>Marattiidae</taxon>
        <taxon>Marattiales</taxon>
        <taxon>Marattiaceae</taxon>
        <taxon>Angiopteris</taxon>
    </lineage>
</organism>
<dbReference type="EC" id="7.1.2.2" evidence="1"/>
<dbReference type="EMBL" id="DQ821119">
    <property type="protein sequence ID" value="ABG79607.1"/>
    <property type="molecule type" value="Genomic_DNA"/>
</dbReference>
<dbReference type="RefSeq" id="YP_001023708.1">
    <property type="nucleotide sequence ID" value="NC_008829.1"/>
</dbReference>
<dbReference type="SMR" id="A2T340"/>
<dbReference type="GeneID" id="4788193"/>
<dbReference type="GO" id="GO:0009535">
    <property type="term" value="C:chloroplast thylakoid membrane"/>
    <property type="evidence" value="ECO:0007669"/>
    <property type="project" value="UniProtKB-SubCell"/>
</dbReference>
<dbReference type="GO" id="GO:0005739">
    <property type="term" value="C:mitochondrion"/>
    <property type="evidence" value="ECO:0007669"/>
    <property type="project" value="GOC"/>
</dbReference>
<dbReference type="GO" id="GO:0045259">
    <property type="term" value="C:proton-transporting ATP synthase complex"/>
    <property type="evidence" value="ECO:0007669"/>
    <property type="project" value="UniProtKB-KW"/>
</dbReference>
<dbReference type="GO" id="GO:0005524">
    <property type="term" value="F:ATP binding"/>
    <property type="evidence" value="ECO:0007669"/>
    <property type="project" value="UniProtKB-UniRule"/>
</dbReference>
<dbReference type="GO" id="GO:0016887">
    <property type="term" value="F:ATP hydrolysis activity"/>
    <property type="evidence" value="ECO:0007669"/>
    <property type="project" value="InterPro"/>
</dbReference>
<dbReference type="GO" id="GO:0046933">
    <property type="term" value="F:proton-transporting ATP synthase activity, rotational mechanism"/>
    <property type="evidence" value="ECO:0007669"/>
    <property type="project" value="UniProtKB-UniRule"/>
</dbReference>
<dbReference type="GO" id="GO:0042776">
    <property type="term" value="P:proton motive force-driven mitochondrial ATP synthesis"/>
    <property type="evidence" value="ECO:0007669"/>
    <property type="project" value="TreeGrafter"/>
</dbReference>
<dbReference type="CDD" id="cd18110">
    <property type="entry name" value="ATP-synt_F1_beta_C"/>
    <property type="match status" value="1"/>
</dbReference>
<dbReference type="CDD" id="cd18115">
    <property type="entry name" value="ATP-synt_F1_beta_N"/>
    <property type="match status" value="1"/>
</dbReference>
<dbReference type="CDD" id="cd01133">
    <property type="entry name" value="F1-ATPase_beta_CD"/>
    <property type="match status" value="1"/>
</dbReference>
<dbReference type="FunFam" id="1.10.1140.10:FF:000001">
    <property type="entry name" value="ATP synthase subunit beta"/>
    <property type="match status" value="1"/>
</dbReference>
<dbReference type="FunFam" id="3.40.50.300:FF:000004">
    <property type="entry name" value="ATP synthase subunit beta"/>
    <property type="match status" value="1"/>
</dbReference>
<dbReference type="FunFam" id="2.40.10.170:FF:000002">
    <property type="entry name" value="ATP synthase subunit beta, chloroplastic"/>
    <property type="match status" value="1"/>
</dbReference>
<dbReference type="Gene3D" id="2.40.10.170">
    <property type="match status" value="1"/>
</dbReference>
<dbReference type="Gene3D" id="1.10.1140.10">
    <property type="entry name" value="Bovine Mitochondrial F1-atpase, Atp Synthase Beta Chain, Chain D, domain 3"/>
    <property type="match status" value="1"/>
</dbReference>
<dbReference type="Gene3D" id="3.40.50.300">
    <property type="entry name" value="P-loop containing nucleotide triphosphate hydrolases"/>
    <property type="match status" value="1"/>
</dbReference>
<dbReference type="HAMAP" id="MF_01347">
    <property type="entry name" value="ATP_synth_beta_bact"/>
    <property type="match status" value="1"/>
</dbReference>
<dbReference type="InterPro" id="IPR003593">
    <property type="entry name" value="AAA+_ATPase"/>
</dbReference>
<dbReference type="InterPro" id="IPR055190">
    <property type="entry name" value="ATP-synt_VA_C"/>
</dbReference>
<dbReference type="InterPro" id="IPR005722">
    <property type="entry name" value="ATP_synth_F1_bsu"/>
</dbReference>
<dbReference type="InterPro" id="IPR020003">
    <property type="entry name" value="ATPase_a/bsu_AS"/>
</dbReference>
<dbReference type="InterPro" id="IPR050053">
    <property type="entry name" value="ATPase_alpha/beta_chains"/>
</dbReference>
<dbReference type="InterPro" id="IPR004100">
    <property type="entry name" value="ATPase_F1/V1/A1_a/bsu_N"/>
</dbReference>
<dbReference type="InterPro" id="IPR036121">
    <property type="entry name" value="ATPase_F1/V1/A1_a/bsu_N_sf"/>
</dbReference>
<dbReference type="InterPro" id="IPR000194">
    <property type="entry name" value="ATPase_F1/V1/A1_a/bsu_nucl-bd"/>
</dbReference>
<dbReference type="InterPro" id="IPR024034">
    <property type="entry name" value="ATPase_F1/V1_b/a_C"/>
</dbReference>
<dbReference type="InterPro" id="IPR027417">
    <property type="entry name" value="P-loop_NTPase"/>
</dbReference>
<dbReference type="NCBIfam" id="TIGR01039">
    <property type="entry name" value="atpD"/>
    <property type="match status" value="1"/>
</dbReference>
<dbReference type="PANTHER" id="PTHR15184">
    <property type="entry name" value="ATP SYNTHASE"/>
    <property type="match status" value="1"/>
</dbReference>
<dbReference type="PANTHER" id="PTHR15184:SF71">
    <property type="entry name" value="ATP SYNTHASE SUBUNIT BETA, MITOCHONDRIAL"/>
    <property type="match status" value="1"/>
</dbReference>
<dbReference type="Pfam" id="PF00006">
    <property type="entry name" value="ATP-synt_ab"/>
    <property type="match status" value="1"/>
</dbReference>
<dbReference type="Pfam" id="PF02874">
    <property type="entry name" value="ATP-synt_ab_N"/>
    <property type="match status" value="1"/>
</dbReference>
<dbReference type="Pfam" id="PF22919">
    <property type="entry name" value="ATP-synt_VA_C"/>
    <property type="match status" value="1"/>
</dbReference>
<dbReference type="SMART" id="SM00382">
    <property type="entry name" value="AAA"/>
    <property type="match status" value="1"/>
</dbReference>
<dbReference type="SUPFAM" id="SSF47917">
    <property type="entry name" value="C-terminal domain of alpha and beta subunits of F1 ATP synthase"/>
    <property type="match status" value="1"/>
</dbReference>
<dbReference type="SUPFAM" id="SSF50615">
    <property type="entry name" value="N-terminal domain of alpha and beta subunits of F1 ATP synthase"/>
    <property type="match status" value="1"/>
</dbReference>
<dbReference type="SUPFAM" id="SSF52540">
    <property type="entry name" value="P-loop containing nucleoside triphosphate hydrolases"/>
    <property type="match status" value="1"/>
</dbReference>
<dbReference type="PROSITE" id="PS00152">
    <property type="entry name" value="ATPASE_ALPHA_BETA"/>
    <property type="match status" value="1"/>
</dbReference>
<comment type="function">
    <text evidence="1">Produces ATP from ADP in the presence of a proton gradient across the membrane. The catalytic sites are hosted primarily by the beta subunits.</text>
</comment>
<comment type="catalytic activity">
    <reaction evidence="1">
        <text>ATP + H2O + 4 H(+)(in) = ADP + phosphate + 5 H(+)(out)</text>
        <dbReference type="Rhea" id="RHEA:57720"/>
        <dbReference type="ChEBI" id="CHEBI:15377"/>
        <dbReference type="ChEBI" id="CHEBI:15378"/>
        <dbReference type="ChEBI" id="CHEBI:30616"/>
        <dbReference type="ChEBI" id="CHEBI:43474"/>
        <dbReference type="ChEBI" id="CHEBI:456216"/>
        <dbReference type="EC" id="7.1.2.2"/>
    </reaction>
</comment>
<comment type="subunit">
    <text evidence="1">F-type ATPases have 2 components, CF(1) - the catalytic core - and CF(0) - the membrane proton channel. CF(1) has five subunits: alpha(3), beta(3), gamma(1), delta(1), epsilon(1). CF(0) has four main subunits: a(1), b(1), b'(1) and c(9-12).</text>
</comment>
<comment type="subcellular location">
    <subcellularLocation>
        <location evidence="1">Plastid</location>
        <location evidence="1">Chloroplast thylakoid membrane</location>
        <topology evidence="1">Peripheral membrane protein</topology>
    </subcellularLocation>
</comment>
<comment type="similarity">
    <text evidence="1">Belongs to the ATPase alpha/beta chains family.</text>
</comment>
<keyword id="KW-0066">ATP synthesis</keyword>
<keyword id="KW-0067">ATP-binding</keyword>
<keyword id="KW-0139">CF(1)</keyword>
<keyword id="KW-0150">Chloroplast</keyword>
<keyword id="KW-0375">Hydrogen ion transport</keyword>
<keyword id="KW-0406">Ion transport</keyword>
<keyword id="KW-0472">Membrane</keyword>
<keyword id="KW-0547">Nucleotide-binding</keyword>
<keyword id="KW-0934">Plastid</keyword>
<keyword id="KW-0793">Thylakoid</keyword>
<keyword id="KW-1278">Translocase</keyword>
<keyword id="KW-0813">Transport</keyword>
<accession>A2T340</accession>
<protein>
    <recommendedName>
        <fullName evidence="1">ATP synthase subunit beta, chloroplastic</fullName>
        <ecNumber evidence="1">7.1.2.2</ecNumber>
    </recommendedName>
    <alternativeName>
        <fullName evidence="1">ATP synthase F1 sector subunit beta</fullName>
    </alternativeName>
    <alternativeName>
        <fullName evidence="1">F-ATPase subunit beta</fullName>
    </alternativeName>
</protein>
<reference key="1">
    <citation type="journal article" date="2007" name="Am. Fern J.">
        <title>The complete plastid genome sequence of Angiopteris evecta (G. Forst.) Hoffm. (Marattiaceae).</title>
        <authorList>
            <person name="Roper J.M."/>
            <person name="Hansen S.K."/>
            <person name="Wolf P.G."/>
            <person name="Karol K.G."/>
            <person name="Mandoli D.F."/>
            <person name="Everett K.D.E."/>
            <person name="Kuehl J.V."/>
            <person name="Boore J.L."/>
        </authorList>
    </citation>
    <scope>NUCLEOTIDE SEQUENCE [LARGE SCALE GENOMIC DNA]</scope>
</reference>
<name>ATPB_ANGEV</name>
<sequence length="492" mass="52812">MKTNPLVFVVSTAVEKNAGYITQIIGPVLDVAFSPGKLPNIYNSLIVKGQNPAGQEINVTCEVQQLLGNDRVRAVAMSATDGLMRGMKVIDTGAPLSVPVGEVTLGRIFNVLGEPVDNLGPVDAGTTSPIHKSAPAFTQLDTKLSIFETGIKVVDLSAPYRRGGKIGLFGGAGVGKTVLIMELINNIAKAHGGVSVFGGVGERTREGNDLYMEMKESKVINQENISESKVALVYGQMNEPPGARMRVGLTALTMAEYFRDVNKQDVLLFIDNIFRFVQAGSEVSASSGRMPSAVGYQPTLATEMGSLQERITSTKEGSITSIQAVYVPADDLTDPAPATTFAHSDATTVLSRGLAAKGIYPAVDPLDSTSTMLQPWIVGEEHYETAQGVKQTLQRYKELQDIIAILGLDELSEEDRLTVARARKIERFLSQPFFVAEVFTGSPGKYVSLIETIKGFQMILSGELDSLPEQAFYLVGNIDEATAKAATLQVES</sequence>
<geneLocation type="chloroplast"/>
<gene>
    <name evidence="1" type="primary">atpB</name>
</gene>
<feature type="chain" id="PRO_0000339605" description="ATP synthase subunit beta, chloroplastic">
    <location>
        <begin position="1"/>
        <end position="492"/>
    </location>
</feature>
<feature type="binding site" evidence="1">
    <location>
        <begin position="170"/>
        <end position="177"/>
    </location>
    <ligand>
        <name>ATP</name>
        <dbReference type="ChEBI" id="CHEBI:30616"/>
    </ligand>
</feature>